<organism>
    <name type="scientific">Bacillus cereus (strain ZK / E33L)</name>
    <dbReference type="NCBI Taxonomy" id="288681"/>
    <lineage>
        <taxon>Bacteria</taxon>
        <taxon>Bacillati</taxon>
        <taxon>Bacillota</taxon>
        <taxon>Bacilli</taxon>
        <taxon>Bacillales</taxon>
        <taxon>Bacillaceae</taxon>
        <taxon>Bacillus</taxon>
        <taxon>Bacillus cereus group</taxon>
    </lineage>
</organism>
<gene>
    <name evidence="1" type="primary">azoR2</name>
    <name type="ordered locus">BCE33L1728</name>
</gene>
<sequence length="208" mass="23023">MSKVLFVKANDRPAEQAVSSKMYETFVNTYKEANPNTEITELDLFALDLPYYGNIAISGGYKRSQGMELTAEEEKAVATVDQYLNQFLEADKVVFAFPLWNFTVPAPLITYISYLSQAGKTFKYTANGPEGLAGGKKVVVLGARGSDYSSEQMAPMEMAVNYVTTVLGFWGITNPETVVIEGHNQYPDRSQQIVEEGLENVKKVAAKF</sequence>
<proteinExistence type="inferred from homology"/>
<dbReference type="EC" id="1.6.5.-" evidence="1"/>
<dbReference type="EC" id="1.7.1.17" evidence="1"/>
<dbReference type="EMBL" id="CP000001">
    <property type="protein sequence ID" value="AAU18525.1"/>
    <property type="molecule type" value="Genomic_DNA"/>
</dbReference>
<dbReference type="SMR" id="Q63CP4"/>
<dbReference type="KEGG" id="bcz:BCE33L1728"/>
<dbReference type="PATRIC" id="fig|288681.22.peg.3809"/>
<dbReference type="Proteomes" id="UP000002612">
    <property type="component" value="Chromosome"/>
</dbReference>
<dbReference type="GO" id="GO:0009055">
    <property type="term" value="F:electron transfer activity"/>
    <property type="evidence" value="ECO:0007669"/>
    <property type="project" value="UniProtKB-UniRule"/>
</dbReference>
<dbReference type="GO" id="GO:0010181">
    <property type="term" value="F:FMN binding"/>
    <property type="evidence" value="ECO:0007669"/>
    <property type="project" value="UniProtKB-UniRule"/>
</dbReference>
<dbReference type="GO" id="GO:0016652">
    <property type="term" value="F:oxidoreductase activity, acting on NAD(P)H as acceptor"/>
    <property type="evidence" value="ECO:0007669"/>
    <property type="project" value="UniProtKB-UniRule"/>
</dbReference>
<dbReference type="GO" id="GO:0016655">
    <property type="term" value="F:oxidoreductase activity, acting on NAD(P)H, quinone or similar compound as acceptor"/>
    <property type="evidence" value="ECO:0007669"/>
    <property type="project" value="InterPro"/>
</dbReference>
<dbReference type="Gene3D" id="3.40.50.360">
    <property type="match status" value="1"/>
</dbReference>
<dbReference type="HAMAP" id="MF_01216">
    <property type="entry name" value="Azoreductase_type1"/>
    <property type="match status" value="1"/>
</dbReference>
<dbReference type="InterPro" id="IPR003680">
    <property type="entry name" value="Flavodoxin_fold"/>
</dbReference>
<dbReference type="InterPro" id="IPR029039">
    <property type="entry name" value="Flavoprotein-like_sf"/>
</dbReference>
<dbReference type="InterPro" id="IPR050104">
    <property type="entry name" value="FMN-dep_NADH:Q_OxRdtase_AzoR1"/>
</dbReference>
<dbReference type="InterPro" id="IPR023048">
    <property type="entry name" value="NADH:quinone_OxRdtase_FMN_depd"/>
</dbReference>
<dbReference type="NCBIfam" id="NF010074">
    <property type="entry name" value="PRK13555.1"/>
    <property type="match status" value="1"/>
</dbReference>
<dbReference type="NCBIfam" id="NF010075">
    <property type="entry name" value="PRK13556.1"/>
    <property type="match status" value="1"/>
</dbReference>
<dbReference type="PANTHER" id="PTHR43741">
    <property type="entry name" value="FMN-DEPENDENT NADH-AZOREDUCTASE 1"/>
    <property type="match status" value="1"/>
</dbReference>
<dbReference type="PANTHER" id="PTHR43741:SF4">
    <property type="entry name" value="FMN-DEPENDENT NADH:QUINONE OXIDOREDUCTASE"/>
    <property type="match status" value="1"/>
</dbReference>
<dbReference type="Pfam" id="PF02525">
    <property type="entry name" value="Flavodoxin_2"/>
    <property type="match status" value="1"/>
</dbReference>
<dbReference type="SUPFAM" id="SSF52218">
    <property type="entry name" value="Flavoproteins"/>
    <property type="match status" value="1"/>
</dbReference>
<reference key="1">
    <citation type="journal article" date="2006" name="J. Bacteriol.">
        <title>Pathogenomic sequence analysis of Bacillus cereus and Bacillus thuringiensis isolates closely related to Bacillus anthracis.</title>
        <authorList>
            <person name="Han C.S."/>
            <person name="Xie G."/>
            <person name="Challacombe J.F."/>
            <person name="Altherr M.R."/>
            <person name="Bhotika S.S."/>
            <person name="Bruce D."/>
            <person name="Campbell C.S."/>
            <person name="Campbell M.L."/>
            <person name="Chen J."/>
            <person name="Chertkov O."/>
            <person name="Cleland C."/>
            <person name="Dimitrijevic M."/>
            <person name="Doggett N.A."/>
            <person name="Fawcett J.J."/>
            <person name="Glavina T."/>
            <person name="Goodwin L.A."/>
            <person name="Hill K.K."/>
            <person name="Hitchcock P."/>
            <person name="Jackson P.J."/>
            <person name="Keim P."/>
            <person name="Kewalramani A.R."/>
            <person name="Longmire J."/>
            <person name="Lucas S."/>
            <person name="Malfatti S."/>
            <person name="McMurry K."/>
            <person name="Meincke L.J."/>
            <person name="Misra M."/>
            <person name="Moseman B.L."/>
            <person name="Mundt M."/>
            <person name="Munk A.C."/>
            <person name="Okinaka R.T."/>
            <person name="Parson-Quintana B."/>
            <person name="Reilly L.P."/>
            <person name="Richardson P."/>
            <person name="Robinson D.L."/>
            <person name="Rubin E."/>
            <person name="Saunders E."/>
            <person name="Tapia R."/>
            <person name="Tesmer J.G."/>
            <person name="Thayer N."/>
            <person name="Thompson L.S."/>
            <person name="Tice H."/>
            <person name="Ticknor L.O."/>
            <person name="Wills P.L."/>
            <person name="Brettin T.S."/>
            <person name="Gilna P."/>
        </authorList>
    </citation>
    <scope>NUCLEOTIDE SEQUENCE [LARGE SCALE GENOMIC DNA]</scope>
    <source>
        <strain>ZK / E33L</strain>
    </source>
</reference>
<name>AZOR2_BACCZ</name>
<keyword id="KW-0285">Flavoprotein</keyword>
<keyword id="KW-0288">FMN</keyword>
<keyword id="KW-0520">NAD</keyword>
<keyword id="KW-0560">Oxidoreductase</keyword>
<evidence type="ECO:0000255" key="1">
    <source>
        <dbReference type="HAMAP-Rule" id="MF_01216"/>
    </source>
</evidence>
<protein>
    <recommendedName>
        <fullName evidence="1">FMN-dependent NADH:quinone oxidoreductase 2</fullName>
        <ecNumber evidence="1">1.6.5.-</ecNumber>
    </recommendedName>
    <alternativeName>
        <fullName evidence="1">Azo-dye reductase 2</fullName>
    </alternativeName>
    <alternativeName>
        <fullName evidence="1">FMN-dependent NADH-azo compound oxidoreductase 2</fullName>
    </alternativeName>
    <alternativeName>
        <fullName evidence="1">FMN-dependent NADH-azoreductase 2</fullName>
        <ecNumber evidence="1">1.7.1.17</ecNumber>
    </alternativeName>
</protein>
<feature type="chain" id="PRO_0000245885" description="FMN-dependent NADH:quinone oxidoreductase 2">
    <location>
        <begin position="1"/>
        <end position="208"/>
    </location>
</feature>
<accession>Q63CP4</accession>
<comment type="function">
    <text evidence="1">Quinone reductase that provides resistance to thiol-specific stress caused by electrophilic quinones.</text>
</comment>
<comment type="function">
    <text evidence="1">Also exhibits azoreductase activity. Catalyzes the reductive cleavage of the azo bond in aromatic azo compounds to the corresponding amines.</text>
</comment>
<comment type="catalytic activity">
    <reaction evidence="1">
        <text>2 a quinone + NADH + H(+) = 2 a 1,4-benzosemiquinone + NAD(+)</text>
        <dbReference type="Rhea" id="RHEA:65952"/>
        <dbReference type="ChEBI" id="CHEBI:15378"/>
        <dbReference type="ChEBI" id="CHEBI:57540"/>
        <dbReference type="ChEBI" id="CHEBI:57945"/>
        <dbReference type="ChEBI" id="CHEBI:132124"/>
        <dbReference type="ChEBI" id="CHEBI:134225"/>
    </reaction>
</comment>
<comment type="catalytic activity">
    <reaction evidence="1">
        <text>N,N-dimethyl-1,4-phenylenediamine + anthranilate + 2 NAD(+) = 2-(4-dimethylaminophenyl)diazenylbenzoate + 2 NADH + 2 H(+)</text>
        <dbReference type="Rhea" id="RHEA:55872"/>
        <dbReference type="ChEBI" id="CHEBI:15378"/>
        <dbReference type="ChEBI" id="CHEBI:15783"/>
        <dbReference type="ChEBI" id="CHEBI:16567"/>
        <dbReference type="ChEBI" id="CHEBI:57540"/>
        <dbReference type="ChEBI" id="CHEBI:57945"/>
        <dbReference type="ChEBI" id="CHEBI:71579"/>
        <dbReference type="EC" id="1.7.1.17"/>
    </reaction>
</comment>
<comment type="cofactor">
    <cofactor evidence="1">
        <name>FMN</name>
        <dbReference type="ChEBI" id="CHEBI:58210"/>
    </cofactor>
    <text evidence="1">Binds 1 FMN per subunit.</text>
</comment>
<comment type="subunit">
    <text evidence="1">Homodimer.</text>
</comment>
<comment type="similarity">
    <text evidence="1">Belongs to the azoreductase type 1 family.</text>
</comment>